<sequence length="121" mass="13388">MIQMQTVLEVADNSGARKVMCIKVLGGSHRRYARVGDVIKVSVKDAIPRSKVKKGAVMRAVVVRTAQGVRRDDGSLIRFDDNAAVLLNNQNEPIGTRIFGPVTRELRERFMKIISLAAEVL</sequence>
<reference key="1">
    <citation type="journal article" date="2004" name="Nat. Genet.">
        <title>Evidence in the Legionella pneumophila genome for exploitation of host cell functions and high genome plasticity.</title>
        <authorList>
            <person name="Cazalet C."/>
            <person name="Rusniok C."/>
            <person name="Brueggemann H."/>
            <person name="Zidane N."/>
            <person name="Magnier A."/>
            <person name="Ma L."/>
            <person name="Tichit M."/>
            <person name="Jarraud S."/>
            <person name="Bouchier C."/>
            <person name="Vandenesch F."/>
            <person name="Kunst F."/>
            <person name="Etienne J."/>
            <person name="Glaser P."/>
            <person name="Buchrieser C."/>
        </authorList>
    </citation>
    <scope>NUCLEOTIDE SEQUENCE [LARGE SCALE GENOMIC DNA]</scope>
    <source>
        <strain>Lens</strain>
    </source>
</reference>
<organism>
    <name type="scientific">Legionella pneumophila (strain Lens)</name>
    <dbReference type="NCBI Taxonomy" id="297245"/>
    <lineage>
        <taxon>Bacteria</taxon>
        <taxon>Pseudomonadati</taxon>
        <taxon>Pseudomonadota</taxon>
        <taxon>Gammaproteobacteria</taxon>
        <taxon>Legionellales</taxon>
        <taxon>Legionellaceae</taxon>
        <taxon>Legionella</taxon>
    </lineage>
</organism>
<keyword id="KW-0687">Ribonucleoprotein</keyword>
<keyword id="KW-0689">Ribosomal protein</keyword>
<keyword id="KW-0694">RNA-binding</keyword>
<keyword id="KW-0699">rRNA-binding</keyword>
<comment type="function">
    <text evidence="1">Binds to 23S rRNA. Forms part of two intersubunit bridges in the 70S ribosome.</text>
</comment>
<comment type="subunit">
    <text evidence="1">Part of the 50S ribosomal subunit. Forms a cluster with proteins L3 and L19. In the 70S ribosome, L14 and L19 interact and together make contacts with the 16S rRNA in bridges B5 and B8.</text>
</comment>
<comment type="similarity">
    <text evidence="1">Belongs to the universal ribosomal protein uL14 family.</text>
</comment>
<proteinExistence type="inferred from homology"/>
<evidence type="ECO:0000255" key="1">
    <source>
        <dbReference type="HAMAP-Rule" id="MF_01367"/>
    </source>
</evidence>
<evidence type="ECO:0000305" key="2"/>
<protein>
    <recommendedName>
        <fullName evidence="1">Large ribosomal subunit protein uL14</fullName>
    </recommendedName>
    <alternativeName>
        <fullName evidence="2">50S ribosomal protein L14</fullName>
    </alternativeName>
</protein>
<feature type="chain" id="PRO_1000055617" description="Large ribosomal subunit protein uL14">
    <location>
        <begin position="1"/>
        <end position="121"/>
    </location>
</feature>
<gene>
    <name evidence="1" type="primary">rplN</name>
    <name type="ordered locus">lpl0379</name>
</gene>
<accession>Q5WZK2</accession>
<name>RL14_LEGPL</name>
<dbReference type="EMBL" id="CR628337">
    <property type="protein sequence ID" value="CAH14610.1"/>
    <property type="molecule type" value="Genomic_DNA"/>
</dbReference>
<dbReference type="RefSeq" id="WP_010946088.1">
    <property type="nucleotide sequence ID" value="NC_006369.1"/>
</dbReference>
<dbReference type="SMR" id="Q5WZK2"/>
<dbReference type="GeneID" id="57034342"/>
<dbReference type="KEGG" id="lpf:lpl0379"/>
<dbReference type="LegioList" id="lpl0379"/>
<dbReference type="HOGENOM" id="CLU_095071_2_1_6"/>
<dbReference type="Proteomes" id="UP000002517">
    <property type="component" value="Chromosome"/>
</dbReference>
<dbReference type="GO" id="GO:0022625">
    <property type="term" value="C:cytosolic large ribosomal subunit"/>
    <property type="evidence" value="ECO:0007669"/>
    <property type="project" value="TreeGrafter"/>
</dbReference>
<dbReference type="GO" id="GO:0070180">
    <property type="term" value="F:large ribosomal subunit rRNA binding"/>
    <property type="evidence" value="ECO:0007669"/>
    <property type="project" value="TreeGrafter"/>
</dbReference>
<dbReference type="GO" id="GO:0003735">
    <property type="term" value="F:structural constituent of ribosome"/>
    <property type="evidence" value="ECO:0007669"/>
    <property type="project" value="InterPro"/>
</dbReference>
<dbReference type="GO" id="GO:0006412">
    <property type="term" value="P:translation"/>
    <property type="evidence" value="ECO:0007669"/>
    <property type="project" value="UniProtKB-UniRule"/>
</dbReference>
<dbReference type="CDD" id="cd00337">
    <property type="entry name" value="Ribosomal_uL14"/>
    <property type="match status" value="1"/>
</dbReference>
<dbReference type="FunFam" id="2.40.150.20:FF:000001">
    <property type="entry name" value="50S ribosomal protein L14"/>
    <property type="match status" value="1"/>
</dbReference>
<dbReference type="Gene3D" id="2.40.150.20">
    <property type="entry name" value="Ribosomal protein L14"/>
    <property type="match status" value="1"/>
</dbReference>
<dbReference type="HAMAP" id="MF_01367">
    <property type="entry name" value="Ribosomal_uL14"/>
    <property type="match status" value="1"/>
</dbReference>
<dbReference type="InterPro" id="IPR000218">
    <property type="entry name" value="Ribosomal_uL14"/>
</dbReference>
<dbReference type="InterPro" id="IPR005745">
    <property type="entry name" value="Ribosomal_uL14_bac-type"/>
</dbReference>
<dbReference type="InterPro" id="IPR019972">
    <property type="entry name" value="Ribosomal_uL14_CS"/>
</dbReference>
<dbReference type="InterPro" id="IPR036853">
    <property type="entry name" value="Ribosomal_uL14_sf"/>
</dbReference>
<dbReference type="NCBIfam" id="TIGR01067">
    <property type="entry name" value="rplN_bact"/>
    <property type="match status" value="1"/>
</dbReference>
<dbReference type="PANTHER" id="PTHR11761">
    <property type="entry name" value="50S/60S RIBOSOMAL PROTEIN L14/L23"/>
    <property type="match status" value="1"/>
</dbReference>
<dbReference type="PANTHER" id="PTHR11761:SF3">
    <property type="entry name" value="LARGE RIBOSOMAL SUBUNIT PROTEIN UL14M"/>
    <property type="match status" value="1"/>
</dbReference>
<dbReference type="Pfam" id="PF00238">
    <property type="entry name" value="Ribosomal_L14"/>
    <property type="match status" value="1"/>
</dbReference>
<dbReference type="SMART" id="SM01374">
    <property type="entry name" value="Ribosomal_L14"/>
    <property type="match status" value="1"/>
</dbReference>
<dbReference type="SUPFAM" id="SSF50193">
    <property type="entry name" value="Ribosomal protein L14"/>
    <property type="match status" value="1"/>
</dbReference>
<dbReference type="PROSITE" id="PS00049">
    <property type="entry name" value="RIBOSOMAL_L14"/>
    <property type="match status" value="1"/>
</dbReference>